<gene>
    <name type="primary">Prl7b1</name>
    <name type="synonym">Prlpn</name>
</gene>
<sequence>MHLSLTQQCLWPLQILLVSNLLLWENVAAVPTSDSGLGISELLTEDLFDDAVILSQHINGLAIETRRIFLSNNFSSDMFVKFTLQFNRHDEFVVNGLNSCHTSSLKTPKTEKEAKRISLPDFVKMILSILRAWDSPLYHMETELKSMTGAPFSILARVKEIEVKNKILLKRIIKIAKKVKHGIEENEEYPVWSELASLQSTNEESRFFALYKMSYCLFVDTDKVEHYLKHLKCRYFDGYMCQDPENQISLQ</sequence>
<protein>
    <recommendedName>
        <fullName>Prolactin-7B1</fullName>
    </recommendedName>
    <alternativeName>
        <fullName>Placental prolactin-like protein N</fullName>
        <shortName>PLP-N</shortName>
        <shortName>PRL-like protein N</shortName>
    </alternativeName>
</protein>
<evidence type="ECO:0000250" key="1"/>
<evidence type="ECO:0000255" key="2"/>
<evidence type="ECO:0000305" key="3"/>
<organism>
    <name type="scientific">Rattus norvegicus</name>
    <name type="common">Rat</name>
    <dbReference type="NCBI Taxonomy" id="10116"/>
    <lineage>
        <taxon>Eukaryota</taxon>
        <taxon>Metazoa</taxon>
        <taxon>Chordata</taxon>
        <taxon>Craniata</taxon>
        <taxon>Vertebrata</taxon>
        <taxon>Euteleostomi</taxon>
        <taxon>Mammalia</taxon>
        <taxon>Eutheria</taxon>
        <taxon>Euarchontoglires</taxon>
        <taxon>Glires</taxon>
        <taxon>Rodentia</taxon>
        <taxon>Myomorpha</taxon>
        <taxon>Muroidea</taxon>
        <taxon>Muridae</taxon>
        <taxon>Murinae</taxon>
        <taxon>Rattus</taxon>
    </lineage>
</organism>
<feature type="signal peptide" evidence="2">
    <location>
        <begin position="1"/>
        <end position="29"/>
    </location>
</feature>
<feature type="chain" id="PRO_0000045150" description="Prolactin-7B1">
    <location>
        <begin position="30"/>
        <end position="251"/>
    </location>
</feature>
<feature type="glycosylation site" description="N-linked (GlcNAc...) asparagine" evidence="2">
    <location>
        <position position="73"/>
    </location>
</feature>
<feature type="disulfide bond" evidence="1">
    <location>
        <begin position="100"/>
        <end position="216"/>
    </location>
</feature>
<feature type="disulfide bond" evidence="1">
    <location>
        <begin position="233"/>
        <end position="241"/>
    </location>
</feature>
<keyword id="KW-1015">Disulfide bond</keyword>
<keyword id="KW-0325">Glycoprotein</keyword>
<keyword id="KW-0372">Hormone</keyword>
<keyword id="KW-1185">Reference proteome</keyword>
<keyword id="KW-0964">Secreted</keyword>
<keyword id="KW-0732">Signal</keyword>
<reference key="1">
    <citation type="journal article" date="2003" name="Endocrinology">
        <title>The mouse prolactin gene family locus.</title>
        <authorList>
            <person name="Wiemers D.O."/>
            <person name="Shao L.-J."/>
            <person name="Ain R."/>
            <person name="Dai G."/>
            <person name="Soares M.J."/>
        </authorList>
    </citation>
    <scope>NUCLEOTIDE SEQUENCE [MRNA]</scope>
    <source>
        <strain>Sprague-Dawley</strain>
    </source>
</reference>
<name>PR7B1_RAT</name>
<accession>Q8CJ42</accession>
<comment type="subcellular location">
    <subcellularLocation>
        <location evidence="1">Secreted</location>
    </subcellularLocation>
</comment>
<comment type="similarity">
    <text evidence="3">Belongs to the somatotropin/prolactin family.</text>
</comment>
<dbReference type="EMBL" id="AF525159">
    <property type="protein sequence ID" value="AAN39707.1"/>
    <property type="molecule type" value="mRNA"/>
</dbReference>
<dbReference type="RefSeq" id="NP_714960.1">
    <property type="nucleotide sequence ID" value="NM_153738.2"/>
</dbReference>
<dbReference type="RefSeq" id="XP_038951354.1">
    <property type="nucleotide sequence ID" value="XM_039095426.2"/>
</dbReference>
<dbReference type="SMR" id="Q8CJ42"/>
<dbReference type="STRING" id="10116.ENSRNOP00000071640"/>
<dbReference type="GlyCosmos" id="Q8CJ42">
    <property type="glycosylation" value="1 site, No reported glycans"/>
</dbReference>
<dbReference type="GlyGen" id="Q8CJ42">
    <property type="glycosylation" value="1 site"/>
</dbReference>
<dbReference type="iPTMnet" id="Q8CJ42"/>
<dbReference type="PhosphoSitePlus" id="Q8CJ42"/>
<dbReference type="PaxDb" id="10116-ENSRNOP00000022447"/>
<dbReference type="Ensembl" id="ENSRNOT00000022447.5">
    <property type="protein sequence ID" value="ENSRNOP00000022447.5"/>
    <property type="gene ID" value="ENSRNOG00000016742.5"/>
</dbReference>
<dbReference type="GeneID" id="266804"/>
<dbReference type="KEGG" id="rno:266804"/>
<dbReference type="UCSC" id="RGD:708582">
    <property type="organism name" value="rat"/>
</dbReference>
<dbReference type="AGR" id="RGD:708582"/>
<dbReference type="CTD" id="75596"/>
<dbReference type="RGD" id="708582">
    <property type="gene designation" value="Prl7b1"/>
</dbReference>
<dbReference type="eggNOG" id="ENOG502QYU3">
    <property type="taxonomic scope" value="Eukaryota"/>
</dbReference>
<dbReference type="GeneTree" id="ENSGT00950000182818"/>
<dbReference type="HOGENOM" id="CLU_088274_0_1_1"/>
<dbReference type="InParanoid" id="Q8CJ42"/>
<dbReference type="OMA" id="SALMCKA"/>
<dbReference type="OrthoDB" id="9590794at2759"/>
<dbReference type="PhylomeDB" id="Q8CJ42"/>
<dbReference type="TreeFam" id="TF332592"/>
<dbReference type="PRO" id="PR:Q8CJ42"/>
<dbReference type="Proteomes" id="UP000002494">
    <property type="component" value="Chromosome 17"/>
</dbReference>
<dbReference type="Bgee" id="ENSRNOG00000016742">
    <property type="expression patterns" value="Expressed in testis"/>
</dbReference>
<dbReference type="ExpressionAtlas" id="Q8CJ42">
    <property type="expression patterns" value="baseline and differential"/>
</dbReference>
<dbReference type="GO" id="GO:0005615">
    <property type="term" value="C:extracellular space"/>
    <property type="evidence" value="ECO:0000318"/>
    <property type="project" value="GO_Central"/>
</dbReference>
<dbReference type="GO" id="GO:0005179">
    <property type="term" value="F:hormone activity"/>
    <property type="evidence" value="ECO:0000318"/>
    <property type="project" value="GO_Central"/>
</dbReference>
<dbReference type="GO" id="GO:0005148">
    <property type="term" value="F:prolactin receptor binding"/>
    <property type="evidence" value="ECO:0000318"/>
    <property type="project" value="GO_Central"/>
</dbReference>
<dbReference type="GO" id="GO:0007166">
    <property type="term" value="P:cell surface receptor signaling pathway"/>
    <property type="evidence" value="ECO:0000318"/>
    <property type="project" value="GO_Central"/>
</dbReference>
<dbReference type="GO" id="GO:0007565">
    <property type="term" value="P:female pregnancy"/>
    <property type="evidence" value="ECO:0000318"/>
    <property type="project" value="GO_Central"/>
</dbReference>
<dbReference type="GO" id="GO:0030879">
    <property type="term" value="P:mammary gland development"/>
    <property type="evidence" value="ECO:0000318"/>
    <property type="project" value="GO_Central"/>
</dbReference>
<dbReference type="GO" id="GO:1903489">
    <property type="term" value="P:positive regulation of lactation"/>
    <property type="evidence" value="ECO:0000318"/>
    <property type="project" value="GO_Central"/>
</dbReference>
<dbReference type="GO" id="GO:0046427">
    <property type="term" value="P:positive regulation of receptor signaling pathway via JAK-STAT"/>
    <property type="evidence" value="ECO:0000318"/>
    <property type="project" value="GO_Central"/>
</dbReference>
<dbReference type="GO" id="GO:0031667">
    <property type="term" value="P:response to nutrient levels"/>
    <property type="evidence" value="ECO:0000318"/>
    <property type="project" value="GO_Central"/>
</dbReference>
<dbReference type="CDD" id="cd10288">
    <property type="entry name" value="prolactin_like"/>
    <property type="match status" value="1"/>
</dbReference>
<dbReference type="FunFam" id="1.20.1250.10:FF:000041">
    <property type="entry name" value="Growth hormone d20"/>
    <property type="match status" value="1"/>
</dbReference>
<dbReference type="Gene3D" id="1.20.1250.10">
    <property type="match status" value="1"/>
</dbReference>
<dbReference type="InterPro" id="IPR009079">
    <property type="entry name" value="4_helix_cytokine-like_core"/>
</dbReference>
<dbReference type="InterPro" id="IPR001400">
    <property type="entry name" value="Somatotropin/Prolactin"/>
</dbReference>
<dbReference type="InterPro" id="IPR018116">
    <property type="entry name" value="Somatotropin_CS"/>
</dbReference>
<dbReference type="PANTHER" id="PTHR11417:SF17">
    <property type="entry name" value="PROLACTIN-7B1"/>
    <property type="match status" value="1"/>
</dbReference>
<dbReference type="PANTHER" id="PTHR11417">
    <property type="entry name" value="SOMATOTROPIN,PROLACTIN"/>
    <property type="match status" value="1"/>
</dbReference>
<dbReference type="Pfam" id="PF00103">
    <property type="entry name" value="Hormone_1"/>
    <property type="match status" value="1"/>
</dbReference>
<dbReference type="PRINTS" id="PR00836">
    <property type="entry name" value="SOMATOTROPIN"/>
</dbReference>
<dbReference type="SUPFAM" id="SSF47266">
    <property type="entry name" value="4-helical cytokines"/>
    <property type="match status" value="1"/>
</dbReference>
<dbReference type="PROSITE" id="PS00266">
    <property type="entry name" value="SOMATOTROPIN_1"/>
    <property type="match status" value="1"/>
</dbReference>
<proteinExistence type="evidence at transcript level"/>